<protein>
    <recommendedName>
        <fullName evidence="2">Ribosome biogenesis regulatory protein homolog</fullName>
    </recommendedName>
</protein>
<feature type="chain" id="PRO_0000394764" description="Ribosome biogenesis regulatory protein homolog">
    <location>
        <begin position="1"/>
        <end position="329"/>
    </location>
</feature>
<feature type="region of interest" description="Disordered" evidence="4">
    <location>
        <begin position="227"/>
        <end position="248"/>
    </location>
</feature>
<feature type="region of interest" description="Disordered" evidence="4">
    <location>
        <begin position="262"/>
        <end position="329"/>
    </location>
</feature>
<feature type="compositionally biased region" description="Basic and acidic residues" evidence="4">
    <location>
        <begin position="278"/>
        <end position="295"/>
    </location>
</feature>
<feature type="compositionally biased region" description="Basic residues" evidence="4">
    <location>
        <begin position="320"/>
        <end position="329"/>
    </location>
</feature>
<evidence type="ECO:0000250" key="1">
    <source>
        <dbReference type="UniProtKB" id="Q15050"/>
    </source>
</evidence>
<evidence type="ECO:0000250" key="2">
    <source>
        <dbReference type="UniProtKB" id="Q9XVT0"/>
    </source>
</evidence>
<evidence type="ECO:0000255" key="3"/>
<evidence type="ECO:0000256" key="4">
    <source>
        <dbReference type="SAM" id="MobiDB-lite"/>
    </source>
</evidence>
<evidence type="ECO:0000312" key="5">
    <source>
        <dbReference type="EMBL" id="CAP25286.1"/>
    </source>
</evidence>
<comment type="function">
    <text evidence="1">Involved in ribosomal large subunit assembly.</text>
</comment>
<comment type="subcellular location">
    <subcellularLocation>
        <location evidence="1">Nucleus</location>
        <location evidence="1">Nucleolus</location>
    </subcellularLocation>
</comment>
<comment type="similarity">
    <text evidence="3">Belongs to the RRS1 family.</text>
</comment>
<keyword id="KW-0539">Nucleus</keyword>
<keyword id="KW-1185">Reference proteome</keyword>
<keyword id="KW-0690">Ribosome biogenesis</keyword>
<name>RRS1_CAEBR</name>
<organism>
    <name type="scientific">Caenorhabditis briggsae</name>
    <dbReference type="NCBI Taxonomy" id="6238"/>
    <lineage>
        <taxon>Eukaryota</taxon>
        <taxon>Metazoa</taxon>
        <taxon>Ecdysozoa</taxon>
        <taxon>Nematoda</taxon>
        <taxon>Chromadorea</taxon>
        <taxon>Rhabditida</taxon>
        <taxon>Rhabditina</taxon>
        <taxon>Rhabditomorpha</taxon>
        <taxon>Rhabditoidea</taxon>
        <taxon>Rhabditidae</taxon>
        <taxon>Peloderinae</taxon>
        <taxon>Caenorhabditis</taxon>
    </lineage>
</organism>
<dbReference type="EMBL" id="HE601135">
    <property type="protein sequence ID" value="CAP25286.1"/>
    <property type="molecule type" value="Genomic_DNA"/>
</dbReference>
<dbReference type="SMR" id="A8WY26"/>
<dbReference type="FunCoup" id="A8WY26">
    <property type="interactions" value="2214"/>
</dbReference>
<dbReference type="STRING" id="6238.A8WY26"/>
<dbReference type="EnsemblMetazoa" id="CBG04617.1">
    <property type="protein sequence ID" value="CBG04617.1"/>
    <property type="gene ID" value="WBGene00027255"/>
</dbReference>
<dbReference type="KEGG" id="cbr:CBG_04617"/>
<dbReference type="CTD" id="8579824"/>
<dbReference type="WormBase" id="CBG04617">
    <property type="protein sequence ID" value="CBP21483"/>
    <property type="gene ID" value="WBGene00027255"/>
    <property type="gene designation" value="Cbr-rrbs-1"/>
</dbReference>
<dbReference type="eggNOG" id="KOG1765">
    <property type="taxonomic scope" value="Eukaryota"/>
</dbReference>
<dbReference type="HOGENOM" id="CLU_065163_1_0_1"/>
<dbReference type="InParanoid" id="A8WY26"/>
<dbReference type="OMA" id="ACDKNRI"/>
<dbReference type="Proteomes" id="UP000008549">
    <property type="component" value="Unassembled WGS sequence"/>
</dbReference>
<dbReference type="GO" id="GO:0005730">
    <property type="term" value="C:nucleolus"/>
    <property type="evidence" value="ECO:0000318"/>
    <property type="project" value="GO_Central"/>
</dbReference>
<dbReference type="GO" id="GO:0030687">
    <property type="term" value="C:preribosome, large subunit precursor"/>
    <property type="evidence" value="ECO:0000318"/>
    <property type="project" value="GO_Central"/>
</dbReference>
<dbReference type="GO" id="GO:0000447">
    <property type="term" value="P:endonucleolytic cleavage in ITS1 to separate SSU-rRNA from 5.8S rRNA and LSU-rRNA from tricistronic rRNA transcript (SSU-rRNA, 5.8S rRNA, LSU-rRNA)"/>
    <property type="evidence" value="ECO:0000318"/>
    <property type="project" value="GO_Central"/>
</dbReference>
<dbReference type="GO" id="GO:0000027">
    <property type="term" value="P:ribosomal large subunit assembly"/>
    <property type="evidence" value="ECO:0000250"/>
    <property type="project" value="UniProtKB"/>
</dbReference>
<dbReference type="GO" id="GO:0042273">
    <property type="term" value="P:ribosomal large subunit biogenesis"/>
    <property type="evidence" value="ECO:0000318"/>
    <property type="project" value="GO_Central"/>
</dbReference>
<dbReference type="InterPro" id="IPR007023">
    <property type="entry name" value="Ribosom_reg"/>
</dbReference>
<dbReference type="PANTHER" id="PTHR17602">
    <property type="entry name" value="RIBOSOME BIOGENESIS REGULATORY PROTEIN"/>
    <property type="match status" value="1"/>
</dbReference>
<dbReference type="PANTHER" id="PTHR17602:SF4">
    <property type="entry name" value="RIBOSOME BIOGENESIS REGULATORY PROTEIN HOMOLOG"/>
    <property type="match status" value="1"/>
</dbReference>
<dbReference type="Pfam" id="PF04939">
    <property type="entry name" value="RRS1"/>
    <property type="match status" value="1"/>
</dbReference>
<proteinExistence type="inferred from homology"/>
<sequence length="329" mass="37835">MADKSTEVEKAIDPIIDLGNLLFIDREPLQGDAEEGLEERARKNTQLLFNNIWQLEQKRVEEAIIVTLPAATYRLPREKKLPEKKEPTKWEKYAKEKGIEKRKKDKKVFDEATKEWKPTYGYRRGNDNTKDWLIEIPDNAEDPNKDFFAERREKKKERVAKNEMQRMKNLARQMKTTVKTGPSTDKMIGVGIDAKDKSKQDVRFAVDRAKLATASAGKFQEGLKGEKANIKTGKKRKFESNEAPVSAEKERALQILQRMKSKKAKIVEEKASAVAGPLREKKEKQEKKGAKEATRQKSQIHRQQWFKNKVDSKKKGTGGAKKKGANKRK</sequence>
<accession>A8WY26</accession>
<reference key="1">
    <citation type="journal article" date="2003" name="PLoS Biol.">
        <title>The genome sequence of Caenorhabditis briggsae: a platform for comparative genomics.</title>
        <authorList>
            <person name="Stein L.D."/>
            <person name="Bao Z."/>
            <person name="Blasiar D."/>
            <person name="Blumenthal T."/>
            <person name="Brent M.R."/>
            <person name="Chen N."/>
            <person name="Chinwalla A."/>
            <person name="Clarke L."/>
            <person name="Clee C."/>
            <person name="Coghlan A."/>
            <person name="Coulson A."/>
            <person name="D'Eustachio P."/>
            <person name="Fitch D.H.A."/>
            <person name="Fulton L.A."/>
            <person name="Fulton R.E."/>
            <person name="Griffiths-Jones S."/>
            <person name="Harris T.W."/>
            <person name="Hillier L.W."/>
            <person name="Kamath R."/>
            <person name="Kuwabara P.E."/>
            <person name="Mardis E.R."/>
            <person name="Marra M.A."/>
            <person name="Miner T.L."/>
            <person name="Minx P."/>
            <person name="Mullikin J.C."/>
            <person name="Plumb R.W."/>
            <person name="Rogers J."/>
            <person name="Schein J.E."/>
            <person name="Sohrmann M."/>
            <person name="Spieth J."/>
            <person name="Stajich J.E."/>
            <person name="Wei C."/>
            <person name="Willey D."/>
            <person name="Wilson R.K."/>
            <person name="Durbin R.M."/>
            <person name="Waterston R.H."/>
        </authorList>
    </citation>
    <scope>NUCLEOTIDE SEQUENCE [LARGE SCALE GENOMIC DNA]</scope>
    <source>
        <strain>AF16</strain>
    </source>
</reference>
<gene>
    <name evidence="5" type="primary">rrbs-1</name>
    <name type="ORF">CBG04617</name>
</gene>